<dbReference type="EC" id="1.14.14.147" evidence="3"/>
<dbReference type="EC" id="1.14.14.-" evidence="3"/>
<dbReference type="EMBL" id="CM000881">
    <property type="protein sequence ID" value="KQK07095.1"/>
    <property type="molecule type" value="Genomic_DNA"/>
</dbReference>
<dbReference type="RefSeq" id="XP_003566445.1">
    <property type="nucleotide sequence ID" value="XM_003566397.3"/>
</dbReference>
<dbReference type="SMR" id="I1HL09"/>
<dbReference type="STRING" id="15368.I1HL09"/>
<dbReference type="EnsemblPlants" id="KQK07095">
    <property type="protein sequence ID" value="KQK07095"/>
    <property type="gene ID" value="BRADI_2g33050v3"/>
</dbReference>
<dbReference type="GeneID" id="100839691"/>
<dbReference type="Gramene" id="KQK07095">
    <property type="protein sequence ID" value="KQK07095"/>
    <property type="gene ID" value="BRADI_2g33050v3"/>
</dbReference>
<dbReference type="KEGG" id="bdi:100839691"/>
<dbReference type="eggNOG" id="KOG0157">
    <property type="taxonomic scope" value="Eukaryota"/>
</dbReference>
<dbReference type="HOGENOM" id="CLU_001570_15_5_1"/>
<dbReference type="InParanoid" id="I1HL09"/>
<dbReference type="OMA" id="KRCRRYG"/>
<dbReference type="OrthoDB" id="3945418at2759"/>
<dbReference type="UniPathway" id="UPA00381"/>
<dbReference type="Proteomes" id="UP000008810">
    <property type="component" value="Chromosome 2"/>
</dbReference>
<dbReference type="ExpressionAtlas" id="I1HL09">
    <property type="expression patterns" value="differential"/>
</dbReference>
<dbReference type="GO" id="GO:0016020">
    <property type="term" value="C:membrane"/>
    <property type="evidence" value="ECO:0007669"/>
    <property type="project" value="UniProtKB-SubCell"/>
</dbReference>
<dbReference type="GO" id="GO:0020037">
    <property type="term" value="F:heme binding"/>
    <property type="evidence" value="ECO:0007669"/>
    <property type="project" value="InterPro"/>
</dbReference>
<dbReference type="GO" id="GO:0005506">
    <property type="term" value="F:iron ion binding"/>
    <property type="evidence" value="ECO:0007669"/>
    <property type="project" value="InterPro"/>
</dbReference>
<dbReference type="GO" id="GO:0016709">
    <property type="term" value="F:oxidoreductase activity, acting on paired donors, with incorporation or reduction of molecular oxygen, NAD(P)H as one donor, and incorporation of one atom of oxygen"/>
    <property type="evidence" value="ECO:0000318"/>
    <property type="project" value="GO_Central"/>
</dbReference>
<dbReference type="GO" id="GO:0016132">
    <property type="term" value="P:brassinosteroid biosynthetic process"/>
    <property type="evidence" value="ECO:0000318"/>
    <property type="project" value="GO_Central"/>
</dbReference>
<dbReference type="GO" id="GO:0010268">
    <property type="term" value="P:brassinosteroid homeostasis"/>
    <property type="evidence" value="ECO:0000318"/>
    <property type="project" value="GO_Central"/>
</dbReference>
<dbReference type="CDD" id="cd11043">
    <property type="entry name" value="CYP90-like"/>
    <property type="match status" value="1"/>
</dbReference>
<dbReference type="FunFam" id="1.10.630.10:FF:000048">
    <property type="entry name" value="3-epi-6-deoxocathasterone 23-monooxygenase CYP90D1"/>
    <property type="match status" value="1"/>
</dbReference>
<dbReference type="Gene3D" id="1.10.630.10">
    <property type="entry name" value="Cytochrome P450"/>
    <property type="match status" value="1"/>
</dbReference>
<dbReference type="InterPro" id="IPR001128">
    <property type="entry name" value="Cyt_P450"/>
</dbReference>
<dbReference type="InterPro" id="IPR017972">
    <property type="entry name" value="Cyt_P450_CS"/>
</dbReference>
<dbReference type="InterPro" id="IPR002403">
    <property type="entry name" value="Cyt_P450_E_grp-IV"/>
</dbReference>
<dbReference type="InterPro" id="IPR036396">
    <property type="entry name" value="Cyt_P450_sf"/>
</dbReference>
<dbReference type="PANTHER" id="PTHR24286">
    <property type="entry name" value="CYTOCHROME P450 26"/>
    <property type="match status" value="1"/>
</dbReference>
<dbReference type="PANTHER" id="PTHR24286:SF226">
    <property type="entry name" value="CYTOCHROME P450 90D2"/>
    <property type="match status" value="1"/>
</dbReference>
<dbReference type="Pfam" id="PF00067">
    <property type="entry name" value="p450"/>
    <property type="match status" value="1"/>
</dbReference>
<dbReference type="PRINTS" id="PR00465">
    <property type="entry name" value="EP450IV"/>
</dbReference>
<dbReference type="SUPFAM" id="SSF48264">
    <property type="entry name" value="Cytochrome P450"/>
    <property type="match status" value="1"/>
</dbReference>
<dbReference type="PROSITE" id="PS00086">
    <property type="entry name" value="CYTOCHROME_P450"/>
    <property type="match status" value="1"/>
</dbReference>
<feature type="chain" id="PRO_0000455310" description="Cytochrome P450 90D2">
    <location>
        <begin position="1"/>
        <end position="510"/>
    </location>
</feature>
<feature type="transmembrane region" description="Helical" evidence="2">
    <location>
        <begin position="6"/>
        <end position="26"/>
    </location>
</feature>
<feature type="binding site" description="axial binding residue" evidence="1">
    <location>
        <position position="444"/>
    </location>
    <ligand>
        <name>heme</name>
        <dbReference type="ChEBI" id="CHEBI:30413"/>
    </ligand>
    <ligandPart>
        <name>Fe</name>
        <dbReference type="ChEBI" id="CHEBI:18248"/>
    </ligandPart>
</feature>
<gene>
    <name evidence="4" type="primary">CYP90D2</name>
    <name evidence="6" type="ordered locus">BRADI_2g33050v3</name>
</gene>
<reference key="1">
    <citation type="journal article" date="2010" name="Nature">
        <title>Genome sequencing and analysis of the model grass Brachypodium distachyon.</title>
        <authorList>
            <consortium name="International Brachypodium Initiative"/>
        </authorList>
    </citation>
    <scope>NUCLEOTIDE SEQUENCE [LARGE SCALE GENOMIC DNA]</scope>
    <source>
        <strain>cv. Bd21</strain>
    </source>
</reference>
<reference key="2">
    <citation type="journal article" date="2020" name="J. Agric. Food Chem.">
        <title>Establishment of biosynthetic pathways to generate castasterone as the biologically active brassinosteroid in Brachypodium distachyon.</title>
        <authorList>
            <person name="Roh J."/>
            <person name="Moon J."/>
            <person name="Youn J.-H."/>
            <person name="Seo C."/>
            <person name="Park Y.J."/>
            <person name="Kim S.-K."/>
        </authorList>
    </citation>
    <scope>FUNCTION</scope>
    <scope>CATALYTIC ACTIVITY</scope>
    <scope>PATHWAY</scope>
</reference>
<name>C90D2_BRADI</name>
<proteinExistence type="evidence at protein level"/>
<sequence length="510" mass="56818">MEALSMVGSGGVYSWPAALLVAAIVVSASVRWWGIKRQPTTTESKARLPRGSLGWPVVGETLAFISAAYSAQPESFVDKRRLLYGKVFKSHLWGSKAVVSSDAEVSRAVLQADASAFVPWYPSSLMQLMGESSILVLGGGLQRRVHGLAGAFFKSPQLKARLTVDMQRRVADAMDAWQCHGVVRVQDEAKSIVFEILVKALIGLEPGQEMHYLKQQFREFIAGLISLPIKLPGTQLYRSIQAKKRMAKLIQKIVQEKREKRMGGNNNATCKAPRDMIDVLMSNGSEELTDELISDNMIDFMIPAEDSVPVLITLAVKYLSECPLALEQLEEENMELKKRKSAVGGTLEWTDYMSLAFTQHVITETLRIGNIINGIMRKAVKDVEVKGQLLIPQGWCVFLYFRSVHLDGHIYDDPYAFNPWRWKERDMMAASSGFTPFGGGQRLCPGVDLARLEASIFLHHLVTTFRWEAEDDTVVTFPTVRLKRGMPIRVSQNIETSGTATFRSTESASV</sequence>
<organism>
    <name type="scientific">Brachypodium distachyon</name>
    <name type="common">Purple false brome</name>
    <name type="synonym">Trachynia distachya</name>
    <dbReference type="NCBI Taxonomy" id="15368"/>
    <lineage>
        <taxon>Eukaryota</taxon>
        <taxon>Viridiplantae</taxon>
        <taxon>Streptophyta</taxon>
        <taxon>Embryophyta</taxon>
        <taxon>Tracheophyta</taxon>
        <taxon>Spermatophyta</taxon>
        <taxon>Magnoliopsida</taxon>
        <taxon>Liliopsida</taxon>
        <taxon>Poales</taxon>
        <taxon>Poaceae</taxon>
        <taxon>BOP clade</taxon>
        <taxon>Pooideae</taxon>
        <taxon>Stipodae</taxon>
        <taxon>Brachypodieae</taxon>
        <taxon>Brachypodium</taxon>
    </lineage>
</organism>
<keyword id="KW-0349">Heme</keyword>
<keyword id="KW-0408">Iron</keyword>
<keyword id="KW-0472">Membrane</keyword>
<keyword id="KW-0479">Metal-binding</keyword>
<keyword id="KW-0503">Monooxygenase</keyword>
<keyword id="KW-0560">Oxidoreductase</keyword>
<keyword id="KW-1185">Reference proteome</keyword>
<keyword id="KW-0812">Transmembrane</keyword>
<keyword id="KW-1133">Transmembrane helix</keyword>
<evidence type="ECO:0000250" key="1">
    <source>
        <dbReference type="UniProtKB" id="P04798"/>
    </source>
</evidence>
<evidence type="ECO:0000255" key="2"/>
<evidence type="ECO:0000269" key="3">
    <source>
    </source>
</evidence>
<evidence type="ECO:0000303" key="4">
    <source>
    </source>
</evidence>
<evidence type="ECO:0000305" key="5"/>
<evidence type="ECO:0000312" key="6">
    <source>
        <dbReference type="EMBL" id="KQK07095.1"/>
    </source>
</evidence>
<comment type="function">
    <text evidence="3">Involved in reduction steps of the biosynthesis of plant campesterol-derivative steroids, ending to castasterone (CS) but missing brassinolide (BL) (PubMed:32146811). Catalyzes the conversion of (22S,24R)-22-hydroxy-5alpha-ergostan-3-one (22-hydroxy-campesta-3-one, 22-OH-3-one) to 3-dehydro-6-deoxoteasterone (6-deoxo3DT, 6-deoxo-3-DHT), 3-epi-6-deoxocathasterone (3-epi-6-deoxoCT) to 6-deoxotyphasterol (6-deoxoTY) and of 6-deoxocathasterone (6-deoxoCT) to 6-deoxoteasterone (6-deoxoTE) (PubMed:32146811).</text>
</comment>
<comment type="catalytic activity">
    <reaction evidence="3">
        <text>3-epi-6-deoxocathasterone + reduced [NADPH--hemoprotein reductase] + O2 = 6-deoxotyphasterol + oxidized [NADPH--hemoprotein reductase] + H2O + H(+)</text>
        <dbReference type="Rhea" id="RHEA:27321"/>
        <dbReference type="Rhea" id="RHEA-COMP:11964"/>
        <dbReference type="Rhea" id="RHEA-COMP:11965"/>
        <dbReference type="ChEBI" id="CHEBI:15377"/>
        <dbReference type="ChEBI" id="CHEBI:15378"/>
        <dbReference type="ChEBI" id="CHEBI:15379"/>
        <dbReference type="ChEBI" id="CHEBI:20717"/>
        <dbReference type="ChEBI" id="CHEBI:57618"/>
        <dbReference type="ChEBI" id="CHEBI:58210"/>
        <dbReference type="ChEBI" id="CHEBI:59410"/>
        <dbReference type="EC" id="1.14.14.147"/>
    </reaction>
    <physiologicalReaction direction="left-to-right" evidence="3">
        <dbReference type="Rhea" id="RHEA:27322"/>
    </physiologicalReaction>
</comment>
<comment type="catalytic activity">
    <reaction evidence="3">
        <text>(22S,24R)-22-hydroxy-5alpha-ergostan-3-one + reduced [NADPH--hemoprotein reductase] + O2 = 3-dehydro-6-deoxoteasterone + oxidized [NADPH--hemoprotein reductase] + H2O + H(+)</text>
        <dbReference type="Rhea" id="RHEA:27325"/>
        <dbReference type="Rhea" id="RHEA-COMP:11964"/>
        <dbReference type="Rhea" id="RHEA-COMP:11965"/>
        <dbReference type="ChEBI" id="CHEBI:15377"/>
        <dbReference type="ChEBI" id="CHEBI:15378"/>
        <dbReference type="ChEBI" id="CHEBI:15379"/>
        <dbReference type="ChEBI" id="CHEBI:20710"/>
        <dbReference type="ChEBI" id="CHEBI:57618"/>
        <dbReference type="ChEBI" id="CHEBI:58210"/>
        <dbReference type="ChEBI" id="CHEBI:59411"/>
        <dbReference type="EC" id="1.14.14.147"/>
    </reaction>
    <physiologicalReaction direction="left-to-right" evidence="3">
        <dbReference type="Rhea" id="RHEA:27326"/>
    </physiologicalReaction>
</comment>
<comment type="catalytic activity">
    <reaction evidence="3">
        <text>6-deoxycathasterone + reduced [NADPH--hemoprotein reductase] + O2 = 6-deoxoteasterone + oxidized [NADPH--hemoprotein reductase] + H2O + H(+)</text>
        <dbReference type="Rhea" id="RHEA:69811"/>
        <dbReference type="Rhea" id="RHEA-COMP:11964"/>
        <dbReference type="Rhea" id="RHEA-COMP:11965"/>
        <dbReference type="ChEBI" id="CHEBI:15377"/>
        <dbReference type="ChEBI" id="CHEBI:15378"/>
        <dbReference type="ChEBI" id="CHEBI:15379"/>
        <dbReference type="ChEBI" id="CHEBI:20714"/>
        <dbReference type="ChEBI" id="CHEBI:20716"/>
        <dbReference type="ChEBI" id="CHEBI:57618"/>
        <dbReference type="ChEBI" id="CHEBI:58210"/>
    </reaction>
    <physiologicalReaction direction="left-to-right" evidence="3">
        <dbReference type="Rhea" id="RHEA:69812"/>
    </physiologicalReaction>
</comment>
<comment type="cofactor">
    <cofactor evidence="1">
        <name>heme</name>
        <dbReference type="ChEBI" id="CHEBI:30413"/>
    </cofactor>
</comment>
<comment type="pathway">
    <text evidence="3">Plant hormone biosynthesis; brassinosteroid biosynthesis.</text>
</comment>
<comment type="subcellular location">
    <subcellularLocation>
        <location evidence="2">Membrane</location>
        <topology evidence="2">Single-pass membrane protein</topology>
    </subcellularLocation>
</comment>
<comment type="similarity">
    <text evidence="5">Belongs to the cytochrome P450 family.</text>
</comment>
<protein>
    <recommendedName>
        <fullName evidence="5">Cytochrome P450 90D2</fullName>
        <shortName evidence="4">BdCYP90D2</shortName>
    </recommendedName>
    <alternativeName>
        <fullName evidence="4">3-dehydro-6-deoxoteasterone synthase</fullName>
        <shortName evidence="4">6-deoxotyphasterol synthase</shortName>
        <ecNumber evidence="3">1.14.14.147</ecNumber>
    </alternativeName>
    <alternativeName>
        <fullName evidence="4">6-deoxoteasterone synthase</fullName>
        <ecNumber evidence="3">1.14.14.-</ecNumber>
    </alternativeName>
</protein>
<accession>I1HL09</accession>